<evidence type="ECO:0000255" key="1">
    <source>
        <dbReference type="HAMAP-Rule" id="MF_00020"/>
    </source>
</evidence>
<evidence type="ECO:0000269" key="2">
    <source>
    </source>
</evidence>
<evidence type="ECO:0000269" key="3">
    <source>
    </source>
</evidence>
<evidence type="ECO:0000305" key="4"/>
<evidence type="ECO:0007829" key="5">
    <source>
        <dbReference type="PDB" id="3SK3"/>
    </source>
</evidence>
<evidence type="ECO:0007829" key="6">
    <source>
        <dbReference type="PDB" id="3SLC"/>
    </source>
</evidence>
<comment type="function">
    <text evidence="1 2">Catalyzes the formation of acetyl phosphate from acetate and ATP. Can also catalyze the reverse reaction. Has broad substrate specificity and can also utilize GTP, UTP and CTP. Can also phosphorylate propionate, but has very low activity with formate and is inactive with butyrate.</text>
</comment>
<comment type="catalytic activity">
    <reaction evidence="1 2">
        <text>acetate + ATP = acetyl phosphate + ADP</text>
        <dbReference type="Rhea" id="RHEA:11352"/>
        <dbReference type="ChEBI" id="CHEBI:22191"/>
        <dbReference type="ChEBI" id="CHEBI:30089"/>
        <dbReference type="ChEBI" id="CHEBI:30616"/>
        <dbReference type="ChEBI" id="CHEBI:456216"/>
        <dbReference type="EC" id="2.7.2.1"/>
    </reaction>
</comment>
<comment type="cofactor">
    <cofactor evidence="1 2">
        <name>Mg(2+)</name>
        <dbReference type="ChEBI" id="CHEBI:18420"/>
    </cofactor>
    <cofactor evidence="1 2">
        <name>Mn(2+)</name>
        <dbReference type="ChEBI" id="CHEBI:29035"/>
    </cofactor>
    <text evidence="1 2">Mg(2+). Can also accept Mn(2+).</text>
</comment>
<comment type="activity regulation">
    <text evidence="2">Inhibited by EDTA, butyrate and citrate.</text>
</comment>
<comment type="biophysicochemical properties">
    <kinetics>
        <KM evidence="2">0.07 mM for ATP</KM>
        <KM evidence="2">0.1 mM for ADP</KM>
        <KM evidence="2">1.2 mM for acetate</KM>
        <KM evidence="2">11.2 mM for propionate</KM>
        <KM evidence="2">0.28 mM for acetyl phosphate</KM>
        <Vmax evidence="2">1550.0 umol/min/mg enzyme with acetate</Vmax>
    </kinetics>
    <phDependence>
        <text evidence="2">Optimum pH is 7.2-7.5.</text>
    </phDependence>
    <temperatureDependence>
        <text evidence="2">Optimum temperature is 35-37 degrees Celsius.</text>
    </temperatureDependence>
</comment>
<comment type="pathway">
    <text evidence="1">Metabolic intermediate biosynthesis; acetyl-CoA biosynthesis; acetyl-CoA from acetate: step 1/2.</text>
</comment>
<comment type="subunit">
    <text evidence="1 2">Homodimer.</text>
</comment>
<comment type="subcellular location">
    <subcellularLocation>
        <location evidence="1">Cytoplasm</location>
    </subcellularLocation>
</comment>
<comment type="disruption phenotype">
    <text evidence="3">Does not grow on ethanolamine and tetrathionate under anoxic conditions; complemented by acetate kinases EutQ.</text>
</comment>
<comment type="similarity">
    <text evidence="1">Belongs to the acetokinase family.</text>
</comment>
<protein>
    <recommendedName>
        <fullName evidence="4">Acetate kinase AckA</fullName>
        <ecNumber evidence="1">2.7.2.1</ecNumber>
    </recommendedName>
    <alternativeName>
        <fullName evidence="1">Acetokinase</fullName>
    </alternativeName>
</protein>
<gene>
    <name evidence="1" type="primary">ackA</name>
    <name type="ordered locus">STM2337</name>
</gene>
<keyword id="KW-0002">3D-structure</keyword>
<keyword id="KW-0067">ATP-binding</keyword>
<keyword id="KW-0963">Cytoplasm</keyword>
<keyword id="KW-0418">Kinase</keyword>
<keyword id="KW-0460">Magnesium</keyword>
<keyword id="KW-0479">Metal-binding</keyword>
<keyword id="KW-0547">Nucleotide-binding</keyword>
<keyword id="KW-1185">Reference proteome</keyword>
<keyword id="KW-0808">Transferase</keyword>
<reference key="1">
    <citation type="journal article" date="2001" name="Nature">
        <title>Complete genome sequence of Salmonella enterica serovar Typhimurium LT2.</title>
        <authorList>
            <person name="McClelland M."/>
            <person name="Sanderson K.E."/>
            <person name="Spieth J."/>
            <person name="Clifton S.W."/>
            <person name="Latreille P."/>
            <person name="Courtney L."/>
            <person name="Porwollik S."/>
            <person name="Ali J."/>
            <person name="Dante M."/>
            <person name="Du F."/>
            <person name="Hou S."/>
            <person name="Layman D."/>
            <person name="Leonard S."/>
            <person name="Nguyen C."/>
            <person name="Scott K."/>
            <person name="Holmes A."/>
            <person name="Grewal N."/>
            <person name="Mulvaney E."/>
            <person name="Ryan E."/>
            <person name="Sun H."/>
            <person name="Florea L."/>
            <person name="Miller W."/>
            <person name="Stoneking T."/>
            <person name="Nhan M."/>
            <person name="Waterston R."/>
            <person name="Wilson R.K."/>
        </authorList>
    </citation>
    <scope>NUCLEOTIDE SEQUENCE [LARGE SCALE GENOMIC DNA]</scope>
    <source>
        <strain>LT2 / SGSC1412 / ATCC 700720</strain>
    </source>
</reference>
<reference key="2">
    <citation type="journal article" date="2016" name="Mol. Microbiol.">
        <title>The EutQ and EutP proteins are novel acetate kinases involved in ethanolamine catabolism: physiological implications for the function of the ethanolamine metabolosome in Salmonella enterica.</title>
        <authorList>
            <person name="Moore T.C."/>
            <person name="Escalante-Semerena J.C."/>
        </authorList>
    </citation>
    <scope>DISRUPTION PHENOTYPE</scope>
    <source>
        <strain>LT2</strain>
    </source>
</reference>
<reference key="3">
    <citation type="journal article" date="2012" name="BMC Struct. Biol.">
        <title>Structural and mechanistic investigations on Salmonella typhimurium acetate kinase (AckA): identification of a putative ligand binding pocket at the dimeric interface.</title>
        <authorList>
            <person name="Chittori S."/>
            <person name="Savithri H.S."/>
            <person name="Murthy M.R."/>
        </authorList>
    </citation>
    <scope>X-RAY CRYSTALLOGRAPHY (1.9 ANGSTROMS) IN COMPLEX WITH CITRATE</scope>
    <scope>CATALYTIC ACTIVITY</scope>
    <scope>BIOPHYSICOCHEMICAL PROPERTIES</scope>
    <scope>FUNCTION</scope>
    <scope>COFACTOR</scope>
    <scope>ACTIVITY REGULATION</scope>
    <scope>SUBUNIT</scope>
</reference>
<name>ACKA_SALTY</name>
<feature type="chain" id="PRO_0000107607" description="Acetate kinase AckA">
    <location>
        <begin position="1"/>
        <end position="400"/>
    </location>
</feature>
<feature type="active site" description="Proton donor/acceptor" evidence="1">
    <location>
        <position position="150"/>
    </location>
</feature>
<feature type="binding site" evidence="1">
    <location>
        <position position="10"/>
    </location>
    <ligand>
        <name>Mg(2+)</name>
        <dbReference type="ChEBI" id="CHEBI:18420"/>
    </ligand>
</feature>
<feature type="binding site" evidence="1">
    <location>
        <position position="17"/>
    </location>
    <ligand>
        <name>ATP</name>
        <dbReference type="ChEBI" id="CHEBI:30616"/>
    </ligand>
</feature>
<feature type="binding site" evidence="1">
    <location>
        <position position="91"/>
    </location>
    <ligand>
        <name>substrate</name>
    </ligand>
</feature>
<feature type="binding site" evidence="1">
    <location>
        <begin position="210"/>
        <end position="214"/>
    </location>
    <ligand>
        <name>ATP</name>
        <dbReference type="ChEBI" id="CHEBI:30616"/>
    </ligand>
</feature>
<feature type="binding site" evidence="1">
    <location>
        <begin position="285"/>
        <end position="287"/>
    </location>
    <ligand>
        <name>ATP</name>
        <dbReference type="ChEBI" id="CHEBI:30616"/>
    </ligand>
</feature>
<feature type="binding site" evidence="1">
    <location>
        <begin position="333"/>
        <end position="337"/>
    </location>
    <ligand>
        <name>ATP</name>
        <dbReference type="ChEBI" id="CHEBI:30616"/>
    </ligand>
</feature>
<feature type="binding site" evidence="1">
    <location>
        <position position="387"/>
    </location>
    <ligand>
        <name>Mg(2+)</name>
        <dbReference type="ChEBI" id="CHEBI:18420"/>
    </ligand>
</feature>
<feature type="site" description="Transition state stabilizer" evidence="1">
    <location>
        <position position="182"/>
    </location>
</feature>
<feature type="site" description="Transition state stabilizer" evidence="1">
    <location>
        <position position="243"/>
    </location>
</feature>
<feature type="strand" evidence="5">
    <location>
        <begin position="5"/>
        <end position="11"/>
    </location>
</feature>
<feature type="strand" evidence="5">
    <location>
        <begin position="16"/>
        <end position="22"/>
    </location>
</feature>
<feature type="turn" evidence="5">
    <location>
        <begin position="23"/>
        <end position="25"/>
    </location>
</feature>
<feature type="strand" evidence="5">
    <location>
        <begin position="28"/>
        <end position="35"/>
    </location>
</feature>
<feature type="strand" evidence="5">
    <location>
        <begin position="43"/>
        <end position="48"/>
    </location>
</feature>
<feature type="strand" evidence="5">
    <location>
        <begin position="51"/>
        <end position="56"/>
    </location>
</feature>
<feature type="helix" evidence="5">
    <location>
        <begin position="63"/>
        <end position="72"/>
    </location>
</feature>
<feature type="turn" evidence="5">
    <location>
        <begin position="73"/>
        <end position="77"/>
    </location>
</feature>
<feature type="helix" evidence="5">
    <location>
        <begin position="79"/>
        <end position="84"/>
    </location>
</feature>
<feature type="strand" evidence="5">
    <location>
        <begin position="85"/>
        <end position="93"/>
    </location>
</feature>
<feature type="turn" evidence="5">
    <location>
        <begin position="96"/>
        <end position="98"/>
    </location>
</feature>
<feature type="helix" evidence="5">
    <location>
        <begin position="107"/>
        <end position="115"/>
    </location>
</feature>
<feature type="helix" evidence="5">
    <location>
        <begin position="117"/>
        <end position="119"/>
    </location>
</feature>
<feature type="turn" evidence="5">
    <location>
        <begin position="121"/>
        <end position="123"/>
    </location>
</feature>
<feature type="helix" evidence="5">
    <location>
        <begin position="124"/>
        <end position="137"/>
    </location>
</feature>
<feature type="helix" evidence="5">
    <location>
        <begin position="139"/>
        <end position="141"/>
    </location>
</feature>
<feature type="strand" evidence="5">
    <location>
        <begin position="145"/>
        <end position="149"/>
    </location>
</feature>
<feature type="helix" evidence="5">
    <location>
        <begin position="152"/>
        <end position="156"/>
    </location>
</feature>
<feature type="helix" evidence="5">
    <location>
        <begin position="159"/>
        <end position="162"/>
    </location>
</feature>
<feature type="helix" evidence="5">
    <location>
        <begin position="169"/>
        <end position="174"/>
    </location>
</feature>
<feature type="helix" evidence="5">
    <location>
        <begin position="183"/>
        <end position="196"/>
    </location>
</feature>
<feature type="helix" evidence="5">
    <location>
        <begin position="201"/>
        <end position="203"/>
    </location>
</feature>
<feature type="strand" evidence="5">
    <location>
        <begin position="206"/>
        <end position="210"/>
    </location>
</feature>
<feature type="strand" evidence="5">
    <location>
        <begin position="212"/>
        <end position="214"/>
    </location>
</feature>
<feature type="strand" evidence="5">
    <location>
        <begin position="216"/>
        <end position="221"/>
    </location>
</feature>
<feature type="strand" evidence="5">
    <location>
        <begin position="224"/>
        <end position="228"/>
    </location>
</feature>
<feature type="strand" evidence="6">
    <location>
        <begin position="236"/>
        <end position="238"/>
    </location>
</feature>
<feature type="helix" evidence="5">
    <location>
        <begin position="249"/>
        <end position="259"/>
    </location>
</feature>
<feature type="helix" evidence="5">
    <location>
        <begin position="263"/>
        <end position="269"/>
    </location>
</feature>
<feature type="helix" evidence="6">
    <location>
        <begin position="275"/>
        <end position="279"/>
    </location>
</feature>
<feature type="turn" evidence="5">
    <location>
        <begin position="280"/>
        <end position="283"/>
    </location>
</feature>
<feature type="helix" evidence="5">
    <location>
        <begin position="285"/>
        <end position="287"/>
    </location>
</feature>
<feature type="turn" evidence="6">
    <location>
        <begin position="293"/>
        <end position="295"/>
    </location>
</feature>
<feature type="helix" evidence="5">
    <location>
        <begin position="296"/>
        <end position="316"/>
    </location>
</feature>
<feature type="helix" evidence="5">
    <location>
        <begin position="317"/>
        <end position="320"/>
    </location>
</feature>
<feature type="strand" evidence="5">
    <location>
        <begin position="327"/>
        <end position="331"/>
    </location>
</feature>
<feature type="helix" evidence="5">
    <location>
        <begin position="332"/>
        <end position="335"/>
    </location>
</feature>
<feature type="helix" evidence="5">
    <location>
        <begin position="339"/>
        <end position="347"/>
    </location>
</feature>
<feature type="helix" evidence="5">
    <location>
        <begin position="350"/>
        <end position="352"/>
    </location>
</feature>
<feature type="helix" evidence="5">
    <location>
        <begin position="358"/>
        <end position="363"/>
    </location>
</feature>
<feature type="strand" evidence="5">
    <location>
        <begin position="380"/>
        <end position="382"/>
    </location>
</feature>
<feature type="helix" evidence="5">
    <location>
        <begin position="387"/>
        <end position="399"/>
    </location>
</feature>
<proteinExistence type="evidence at protein level"/>
<sequence>MSSKLVLVLNCGSSSLKFAIIDAVNGDEYLSGLAECFHLPEARIKWKMDGSKQEAALGAGAAHSEALNFIVNTILAQKPELSAQLTAIGHRIVHGGEKYTSSVVIDESVIQGIKDSASFAPLHNPAHLIGIAEALKSFPQLKDKNVAVFDTAFHQTMPEESYLYALPYSLYKEHGVRRYGAHGTSHFYVTQEAAKMLNKPVEELNIITCHLGNGGSVSAIRNGKCVDTSMGLTPLEGLVMGTRSGDIDPAIIFHLHDTLGMSVDQINKMLTKESGLLGLTEVTSDCRYVEDNYATKEDAKRAMDVYCHRLAKYIGSYTALMDGRLDAVVFTGGIGENAAMVRELSLGKLGVLGFEVDHERNLAARFGKSGFINKEGTRPAVVIPTNEELVIAQDASRLTA</sequence>
<dbReference type="EC" id="2.7.2.1" evidence="1"/>
<dbReference type="EMBL" id="AE006468">
    <property type="protein sequence ID" value="AAL21238.1"/>
    <property type="molecule type" value="Genomic_DNA"/>
</dbReference>
<dbReference type="RefSeq" id="NP_461279.1">
    <property type="nucleotide sequence ID" value="NC_003197.2"/>
</dbReference>
<dbReference type="RefSeq" id="WP_000095689.1">
    <property type="nucleotide sequence ID" value="NC_003197.2"/>
</dbReference>
<dbReference type="PDB" id="3SK3">
    <property type="method" value="X-ray"/>
    <property type="resolution" value="1.90 A"/>
    <property type="chains" value="A/B=1-400"/>
</dbReference>
<dbReference type="PDB" id="3SLC">
    <property type="method" value="X-ray"/>
    <property type="resolution" value="2.70 A"/>
    <property type="chains" value="A/B/C/D=1-400"/>
</dbReference>
<dbReference type="PDBsum" id="3SK3"/>
<dbReference type="PDBsum" id="3SLC"/>
<dbReference type="SMR" id="P63411"/>
<dbReference type="STRING" id="99287.STM2337"/>
<dbReference type="PaxDb" id="99287-STM2337"/>
<dbReference type="GeneID" id="1253859"/>
<dbReference type="KEGG" id="stm:STM2337"/>
<dbReference type="PATRIC" id="fig|99287.12.peg.2474"/>
<dbReference type="HOGENOM" id="CLU_020352_0_0_6"/>
<dbReference type="OMA" id="HKYVSQR"/>
<dbReference type="PhylomeDB" id="P63411"/>
<dbReference type="BioCyc" id="SENT99287:STM2337-MONOMER"/>
<dbReference type="BRENDA" id="2.7.2.1">
    <property type="organism ID" value="5542"/>
</dbReference>
<dbReference type="UniPathway" id="UPA00340">
    <property type="reaction ID" value="UER00458"/>
</dbReference>
<dbReference type="EvolutionaryTrace" id="P63411"/>
<dbReference type="Proteomes" id="UP000001014">
    <property type="component" value="Chromosome"/>
</dbReference>
<dbReference type="GO" id="GO:0005829">
    <property type="term" value="C:cytosol"/>
    <property type="evidence" value="ECO:0000318"/>
    <property type="project" value="GO_Central"/>
</dbReference>
<dbReference type="GO" id="GO:0008776">
    <property type="term" value="F:acetate kinase activity"/>
    <property type="evidence" value="ECO:0000314"/>
    <property type="project" value="CACAO"/>
</dbReference>
<dbReference type="GO" id="GO:0005524">
    <property type="term" value="F:ATP binding"/>
    <property type="evidence" value="ECO:0007669"/>
    <property type="project" value="UniProtKB-KW"/>
</dbReference>
<dbReference type="GO" id="GO:0047900">
    <property type="term" value="F:formate kinase activity"/>
    <property type="evidence" value="ECO:0000314"/>
    <property type="project" value="CACAO"/>
</dbReference>
<dbReference type="GO" id="GO:0000287">
    <property type="term" value="F:magnesium ion binding"/>
    <property type="evidence" value="ECO:0007669"/>
    <property type="project" value="UniProtKB-UniRule"/>
</dbReference>
<dbReference type="GO" id="GO:0008980">
    <property type="term" value="F:propionate kinase activity"/>
    <property type="evidence" value="ECO:0000314"/>
    <property type="project" value="CACAO"/>
</dbReference>
<dbReference type="GO" id="GO:0006083">
    <property type="term" value="P:acetate metabolic process"/>
    <property type="evidence" value="ECO:0000318"/>
    <property type="project" value="GO_Central"/>
</dbReference>
<dbReference type="GO" id="GO:0006085">
    <property type="term" value="P:acetyl-CoA biosynthetic process"/>
    <property type="evidence" value="ECO:0007669"/>
    <property type="project" value="UniProtKB-UniRule"/>
</dbReference>
<dbReference type="CDD" id="cd24010">
    <property type="entry name" value="ASKHA_NBD_AcK_PK"/>
    <property type="match status" value="1"/>
</dbReference>
<dbReference type="FunFam" id="3.30.420.40:FF:000041">
    <property type="entry name" value="Acetate kinase"/>
    <property type="match status" value="1"/>
</dbReference>
<dbReference type="FunFam" id="3.30.420.40:FF:000042">
    <property type="entry name" value="Acetate kinase"/>
    <property type="match status" value="1"/>
</dbReference>
<dbReference type="Gene3D" id="3.30.420.40">
    <property type="match status" value="2"/>
</dbReference>
<dbReference type="HAMAP" id="MF_00020">
    <property type="entry name" value="Acetate_kinase"/>
    <property type="match status" value="1"/>
</dbReference>
<dbReference type="InterPro" id="IPR004372">
    <property type="entry name" value="Ac/propionate_kinase"/>
</dbReference>
<dbReference type="InterPro" id="IPR000890">
    <property type="entry name" value="Aliphatic_acid_kin_short-chain"/>
</dbReference>
<dbReference type="InterPro" id="IPR023865">
    <property type="entry name" value="Aliphatic_acid_kinase_CS"/>
</dbReference>
<dbReference type="InterPro" id="IPR043129">
    <property type="entry name" value="ATPase_NBD"/>
</dbReference>
<dbReference type="NCBIfam" id="TIGR00016">
    <property type="entry name" value="ackA"/>
    <property type="match status" value="1"/>
</dbReference>
<dbReference type="PANTHER" id="PTHR21060">
    <property type="entry name" value="ACETATE KINASE"/>
    <property type="match status" value="1"/>
</dbReference>
<dbReference type="PANTHER" id="PTHR21060:SF21">
    <property type="entry name" value="ACETATE KINASE"/>
    <property type="match status" value="1"/>
</dbReference>
<dbReference type="Pfam" id="PF00871">
    <property type="entry name" value="Acetate_kinase"/>
    <property type="match status" value="1"/>
</dbReference>
<dbReference type="PIRSF" id="PIRSF000722">
    <property type="entry name" value="Acetate_prop_kin"/>
    <property type="match status" value="1"/>
</dbReference>
<dbReference type="PRINTS" id="PR00471">
    <property type="entry name" value="ACETATEKNASE"/>
</dbReference>
<dbReference type="SUPFAM" id="SSF53067">
    <property type="entry name" value="Actin-like ATPase domain"/>
    <property type="match status" value="2"/>
</dbReference>
<dbReference type="PROSITE" id="PS01075">
    <property type="entry name" value="ACETATE_KINASE_1"/>
    <property type="match status" value="1"/>
</dbReference>
<dbReference type="PROSITE" id="PS01076">
    <property type="entry name" value="ACETATE_KINASE_2"/>
    <property type="match status" value="1"/>
</dbReference>
<accession>P63411</accession>
<accession>Q8XF99</accession>
<organism>
    <name type="scientific">Salmonella typhimurium (strain LT2 / SGSC1412 / ATCC 700720)</name>
    <dbReference type="NCBI Taxonomy" id="99287"/>
    <lineage>
        <taxon>Bacteria</taxon>
        <taxon>Pseudomonadati</taxon>
        <taxon>Pseudomonadota</taxon>
        <taxon>Gammaproteobacteria</taxon>
        <taxon>Enterobacterales</taxon>
        <taxon>Enterobacteriaceae</taxon>
        <taxon>Salmonella</taxon>
    </lineage>
</organism>